<evidence type="ECO:0000255" key="1">
    <source>
        <dbReference type="HAMAP-Rule" id="MF_01085"/>
    </source>
</evidence>
<accession>B1JJS9</accession>
<sequence>MSEPLKPRIDFEQPLQSLDEPVLKSAQAFDEQAAEKFYPAAPELDAEDEEGRVEGLVNAALKPKRSLWRKMVTAGMVILGASVIAQSVQWVNQAWQQQDWIALGATTAGGLIILAGVGSVVTEWRRLYHLRQRAEERDIARALLVSHGVGQGRVFCEKLARQAGLDQGHPALQRWQASLHETHNDREVVELYAKLVQPALDNQARAEISRYAAESALMIAVSPLALVDMAFIAWRNIRLINRIAALYGIELGYFSRIRLFRLVLLNIAFAGASELVREVGMDWLSQDLAARLSARAAQGIGAGLLTARLGIKAMELCRPLPWLEGDKPKLGDFRRQLMNQLKNTLPKKDKTAH</sequence>
<feature type="chain" id="PRO_1000136904" description="UPF0283 membrane protein YPK_1899">
    <location>
        <begin position="1"/>
        <end position="353"/>
    </location>
</feature>
<feature type="transmembrane region" description="Helical" evidence="1">
    <location>
        <begin position="71"/>
        <end position="91"/>
    </location>
</feature>
<feature type="transmembrane region" description="Helical" evidence="1">
    <location>
        <begin position="101"/>
        <end position="121"/>
    </location>
</feature>
<feature type="transmembrane region" description="Helical" evidence="1">
    <location>
        <begin position="214"/>
        <end position="234"/>
    </location>
</feature>
<dbReference type="EMBL" id="CP000950">
    <property type="protein sequence ID" value="ACA68190.1"/>
    <property type="molecule type" value="Genomic_DNA"/>
</dbReference>
<dbReference type="RefSeq" id="WP_002210980.1">
    <property type="nucleotide sequence ID" value="NZ_CP009792.1"/>
</dbReference>
<dbReference type="KEGG" id="ypy:YPK_1899"/>
<dbReference type="PATRIC" id="fig|502800.11.peg.2569"/>
<dbReference type="GO" id="GO:0005886">
    <property type="term" value="C:plasma membrane"/>
    <property type="evidence" value="ECO:0007669"/>
    <property type="project" value="UniProtKB-SubCell"/>
</dbReference>
<dbReference type="HAMAP" id="MF_01085">
    <property type="entry name" value="UPF0283"/>
    <property type="match status" value="1"/>
</dbReference>
<dbReference type="InterPro" id="IPR021147">
    <property type="entry name" value="DUF697"/>
</dbReference>
<dbReference type="InterPro" id="IPR006507">
    <property type="entry name" value="UPF0283"/>
</dbReference>
<dbReference type="NCBIfam" id="TIGR01620">
    <property type="entry name" value="hyp_HI0043"/>
    <property type="match status" value="1"/>
</dbReference>
<dbReference type="PANTHER" id="PTHR39342">
    <property type="entry name" value="UPF0283 MEMBRANE PROTEIN YCJF"/>
    <property type="match status" value="1"/>
</dbReference>
<dbReference type="PANTHER" id="PTHR39342:SF1">
    <property type="entry name" value="UPF0283 MEMBRANE PROTEIN YCJF"/>
    <property type="match status" value="1"/>
</dbReference>
<dbReference type="Pfam" id="PF05128">
    <property type="entry name" value="DUF697"/>
    <property type="match status" value="1"/>
</dbReference>
<keyword id="KW-0997">Cell inner membrane</keyword>
<keyword id="KW-1003">Cell membrane</keyword>
<keyword id="KW-0472">Membrane</keyword>
<keyword id="KW-0812">Transmembrane</keyword>
<keyword id="KW-1133">Transmembrane helix</keyword>
<reference key="1">
    <citation type="submission" date="2008-02" db="EMBL/GenBank/DDBJ databases">
        <title>Complete sequence of Yersinia pseudotuberculosis YPIII.</title>
        <authorList>
            <consortium name="US DOE Joint Genome Institute"/>
            <person name="Copeland A."/>
            <person name="Lucas S."/>
            <person name="Lapidus A."/>
            <person name="Glavina del Rio T."/>
            <person name="Dalin E."/>
            <person name="Tice H."/>
            <person name="Bruce D."/>
            <person name="Goodwin L."/>
            <person name="Pitluck S."/>
            <person name="Munk A.C."/>
            <person name="Brettin T."/>
            <person name="Detter J.C."/>
            <person name="Han C."/>
            <person name="Tapia R."/>
            <person name="Schmutz J."/>
            <person name="Larimer F."/>
            <person name="Land M."/>
            <person name="Hauser L."/>
            <person name="Challacombe J.F."/>
            <person name="Green L."/>
            <person name="Lindler L.E."/>
            <person name="Nikolich M.P."/>
            <person name="Richardson P."/>
        </authorList>
    </citation>
    <scope>NUCLEOTIDE SEQUENCE [LARGE SCALE GENOMIC DNA]</scope>
    <source>
        <strain>YPIII</strain>
    </source>
</reference>
<organism>
    <name type="scientific">Yersinia pseudotuberculosis serotype O:3 (strain YPIII)</name>
    <dbReference type="NCBI Taxonomy" id="502800"/>
    <lineage>
        <taxon>Bacteria</taxon>
        <taxon>Pseudomonadati</taxon>
        <taxon>Pseudomonadota</taxon>
        <taxon>Gammaproteobacteria</taxon>
        <taxon>Enterobacterales</taxon>
        <taxon>Yersiniaceae</taxon>
        <taxon>Yersinia</taxon>
    </lineage>
</organism>
<comment type="subcellular location">
    <subcellularLocation>
        <location evidence="1">Cell inner membrane</location>
        <topology evidence="1">Multi-pass membrane protein</topology>
    </subcellularLocation>
</comment>
<comment type="similarity">
    <text evidence="1">Belongs to the UPF0283 family.</text>
</comment>
<proteinExistence type="inferred from homology"/>
<name>Y1899_YERPY</name>
<protein>
    <recommendedName>
        <fullName evidence="1">UPF0283 membrane protein YPK_1899</fullName>
    </recommendedName>
</protein>
<gene>
    <name type="ordered locus">YPK_1899</name>
</gene>